<evidence type="ECO:0000255" key="1">
    <source>
        <dbReference type="HAMAP-Rule" id="MF_00095"/>
    </source>
</evidence>
<gene>
    <name evidence="1" type="primary">sfsA</name>
    <name type="ordered locus">CHY_2087</name>
</gene>
<accession>Q3AAC8</accession>
<keyword id="KW-1185">Reference proteome</keyword>
<sequence length="229" mass="25930">MEFNFTPIPAVFCKKLNRFVGEVVLQGEKVLVHIPNSGRLAEILTEGRLVYLREGKNPGRKYQYDLVLAQMPESLVLVDSLLPNKIAQGLLEKGIIKPFSREIDQVAAEQTKGQSRFDFKVQLRDKTGFIEVKSVTLVEGKYALFPDAPTPRGVRHLEELRALSSQYLTAVVFLICREDAEVFKPNDKCDPYFASALKKAAMAGVYIKAYRLKLDLKGVYFDREMEVVL</sequence>
<dbReference type="EMBL" id="CP000141">
    <property type="protein sequence ID" value="ABB15020.1"/>
    <property type="molecule type" value="Genomic_DNA"/>
</dbReference>
<dbReference type="RefSeq" id="WP_011344979.1">
    <property type="nucleotide sequence ID" value="NC_007503.1"/>
</dbReference>
<dbReference type="SMR" id="Q3AAC8"/>
<dbReference type="STRING" id="246194.CHY_2087"/>
<dbReference type="KEGG" id="chy:CHY_2087"/>
<dbReference type="eggNOG" id="COG1489">
    <property type="taxonomic scope" value="Bacteria"/>
</dbReference>
<dbReference type="HOGENOM" id="CLU_052299_1_0_9"/>
<dbReference type="InParanoid" id="Q3AAC8"/>
<dbReference type="OrthoDB" id="9802365at2"/>
<dbReference type="Proteomes" id="UP000002706">
    <property type="component" value="Chromosome"/>
</dbReference>
<dbReference type="GO" id="GO:0003677">
    <property type="term" value="F:DNA binding"/>
    <property type="evidence" value="ECO:0007669"/>
    <property type="project" value="InterPro"/>
</dbReference>
<dbReference type="CDD" id="cd22359">
    <property type="entry name" value="SfsA-like_bacterial"/>
    <property type="match status" value="1"/>
</dbReference>
<dbReference type="Gene3D" id="2.40.50.580">
    <property type="match status" value="1"/>
</dbReference>
<dbReference type="Gene3D" id="3.40.1350.60">
    <property type="match status" value="1"/>
</dbReference>
<dbReference type="HAMAP" id="MF_00095">
    <property type="entry name" value="SfsA"/>
    <property type="match status" value="1"/>
</dbReference>
<dbReference type="InterPro" id="IPR005224">
    <property type="entry name" value="SfsA"/>
</dbReference>
<dbReference type="InterPro" id="IPR040452">
    <property type="entry name" value="SfsA_C"/>
</dbReference>
<dbReference type="InterPro" id="IPR041465">
    <property type="entry name" value="SfsA_N"/>
</dbReference>
<dbReference type="NCBIfam" id="TIGR00230">
    <property type="entry name" value="sfsA"/>
    <property type="match status" value="1"/>
</dbReference>
<dbReference type="PANTHER" id="PTHR30545">
    <property type="entry name" value="SUGAR FERMENTATION STIMULATION PROTEIN A"/>
    <property type="match status" value="1"/>
</dbReference>
<dbReference type="PANTHER" id="PTHR30545:SF2">
    <property type="entry name" value="SUGAR FERMENTATION STIMULATION PROTEIN A"/>
    <property type="match status" value="1"/>
</dbReference>
<dbReference type="Pfam" id="PF03749">
    <property type="entry name" value="SfsA"/>
    <property type="match status" value="1"/>
</dbReference>
<dbReference type="Pfam" id="PF17746">
    <property type="entry name" value="SfsA_N"/>
    <property type="match status" value="1"/>
</dbReference>
<protein>
    <recommendedName>
        <fullName evidence="1">Sugar fermentation stimulation protein homolog</fullName>
    </recommendedName>
</protein>
<name>SFSA_CARHZ</name>
<feature type="chain" id="PRO_1000075536" description="Sugar fermentation stimulation protein homolog">
    <location>
        <begin position="1"/>
        <end position="229"/>
    </location>
</feature>
<organism>
    <name type="scientific">Carboxydothermus hydrogenoformans (strain ATCC BAA-161 / DSM 6008 / Z-2901)</name>
    <dbReference type="NCBI Taxonomy" id="246194"/>
    <lineage>
        <taxon>Bacteria</taxon>
        <taxon>Bacillati</taxon>
        <taxon>Bacillota</taxon>
        <taxon>Clostridia</taxon>
        <taxon>Thermoanaerobacterales</taxon>
        <taxon>Thermoanaerobacteraceae</taxon>
        <taxon>Carboxydothermus</taxon>
    </lineage>
</organism>
<comment type="similarity">
    <text evidence="1">Belongs to the SfsA family.</text>
</comment>
<proteinExistence type="inferred from homology"/>
<reference key="1">
    <citation type="journal article" date="2005" name="PLoS Genet.">
        <title>Life in hot carbon monoxide: the complete genome sequence of Carboxydothermus hydrogenoformans Z-2901.</title>
        <authorList>
            <person name="Wu M."/>
            <person name="Ren Q."/>
            <person name="Durkin A.S."/>
            <person name="Daugherty S.C."/>
            <person name="Brinkac L.M."/>
            <person name="Dodson R.J."/>
            <person name="Madupu R."/>
            <person name="Sullivan S.A."/>
            <person name="Kolonay J.F."/>
            <person name="Nelson W.C."/>
            <person name="Tallon L.J."/>
            <person name="Jones K.M."/>
            <person name="Ulrich L.E."/>
            <person name="Gonzalez J.M."/>
            <person name="Zhulin I.B."/>
            <person name="Robb F.T."/>
            <person name="Eisen J.A."/>
        </authorList>
    </citation>
    <scope>NUCLEOTIDE SEQUENCE [LARGE SCALE GENOMIC DNA]</scope>
    <source>
        <strain>ATCC BAA-161 / DSM 6008 / Z-2901</strain>
    </source>
</reference>